<proteinExistence type="evidence at protein level"/>
<reference evidence="12" key="1">
    <citation type="journal article" date="2002" name="Nature">
        <title>Genome sequence of the human malaria parasite Plasmodium falciparum.</title>
        <authorList>
            <person name="Gardner M.J."/>
            <person name="Hall N."/>
            <person name="Fung E."/>
            <person name="White O."/>
            <person name="Berriman M."/>
            <person name="Hyman R.W."/>
            <person name="Carlton J.M."/>
            <person name="Pain A."/>
            <person name="Nelson K.E."/>
            <person name="Bowman S."/>
            <person name="Paulsen I.T."/>
            <person name="James K.D."/>
            <person name="Eisen J.A."/>
            <person name="Rutherford K.M."/>
            <person name="Salzberg S.L."/>
            <person name="Craig A."/>
            <person name="Kyes S."/>
            <person name="Chan M.-S."/>
            <person name="Nene V."/>
            <person name="Shallom S.J."/>
            <person name="Suh B."/>
            <person name="Peterson J."/>
            <person name="Angiuoli S."/>
            <person name="Pertea M."/>
            <person name="Allen J."/>
            <person name="Selengut J."/>
            <person name="Haft D."/>
            <person name="Mather M.W."/>
            <person name="Vaidya A.B."/>
            <person name="Martin D.M.A."/>
            <person name="Fairlamb A.H."/>
            <person name="Fraunholz M.J."/>
            <person name="Roos D.S."/>
            <person name="Ralph S.A."/>
            <person name="McFadden G.I."/>
            <person name="Cummings L.M."/>
            <person name="Subramanian G.M."/>
            <person name="Mungall C."/>
            <person name="Venter J.C."/>
            <person name="Carucci D.J."/>
            <person name="Hoffman S.L."/>
            <person name="Newbold C."/>
            <person name="Davis R.W."/>
            <person name="Fraser C.M."/>
            <person name="Barrell B.G."/>
        </authorList>
    </citation>
    <scope>NUCLEOTIDE SEQUENCE [LARGE SCALE GENOMIC DNA]</scope>
    <source>
        <strain evidence="12">3D7</strain>
    </source>
</reference>
<reference evidence="10" key="2">
    <citation type="journal article" date="2009" name="FEBS Lett.">
        <title>The novel heme oxygenase-like protein from Plasmodiumfalciparum converts heme to bilirubin IXalpha in the apicoplast.</title>
        <authorList>
            <person name="Okada K."/>
        </authorList>
    </citation>
    <scope>FUNCTION</scope>
</reference>
<reference evidence="10" key="3">
    <citation type="journal article" date="2010" name="Cell Biol. Int.">
        <title>In vivo uptake of a haem analogue Zn protoporphyrin IX by the human malaria parasite P. falciparum-infected red blood cells.</title>
        <authorList>
            <person name="Sartorello R."/>
            <person name="Budu A."/>
            <person name="Bagnaresi P."/>
            <person name="Fernandes C.A."/>
            <person name="Sato P.M."/>
            <person name="Bueno V.B."/>
            <person name="Fontes M.R."/>
            <person name="Oliveira P.L."/>
            <person name="Paiva-Silva G.O."/>
            <person name="Alves S.V."/>
            <person name="Netto L.E."/>
            <person name="Catalani L.H."/>
            <person name="Garcia C.R."/>
        </authorList>
    </citation>
    <scope>FUNCTION</scope>
</reference>
<reference evidence="10" key="4">
    <citation type="journal article" date="2012" name="J. Biol. Chem.">
        <title>Direct tests of enzymatic heme degradation by the malaria parasite Plasmodium falciparum.</title>
        <authorList>
            <person name="Sigala P.A."/>
            <person name="Crowley J.R."/>
            <person name="Hsieh S."/>
            <person name="Henderson J.P."/>
            <person name="Goldberg D.E."/>
        </authorList>
    </citation>
    <scope>FUNCTION</scope>
</reference>
<reference evidence="13" key="5">
    <citation type="journal article" date="2024" name="Elife">
        <title>Malaria parasites require a divergent heme oxygenase for apicoplast gene expression and biogenesis.</title>
        <authorList>
            <person name="Blackwell A.M."/>
            <person name="Jami-Alahmadi Y."/>
            <person name="Nasamu A.S."/>
            <person name="Kudo S."/>
            <person name="Senoo A."/>
            <person name="Slam C."/>
            <person name="Tsumoto K."/>
            <person name="Wohlschlegel J.A."/>
            <person name="Manuel Martinez Caaveiro J."/>
            <person name="Goldberg D.E."/>
            <person name="Sigala P.A."/>
        </authorList>
    </citation>
    <scope>X-RAY CRYSTALLOGRAPHY (2.78 ANGSTROMS) OF 84-305</scope>
    <scope>PROTEIN SEQUENCE OF 33-44</scope>
    <scope>FUNCTION</scope>
    <scope>SUBCELLULAR LOCATION</scope>
    <scope>PROTEOLYTIC PROCESSING</scope>
    <scope>DISRUPTION PHENOTYPE</scope>
    <scope>APICOPLAST-TARGETING REGION</scope>
</reference>
<feature type="signal peptide" evidence="1">
    <location>
        <begin position="1"/>
        <end position="18"/>
    </location>
</feature>
<feature type="chain" id="PRO_0000462531" description="Divergent heme oxygenase-like protein" evidence="1">
    <location>
        <begin position="19"/>
        <end position="305"/>
    </location>
</feature>
<feature type="region of interest" description="Sufficient for apicoplast targeting" evidence="5">
    <location>
        <begin position="1"/>
        <end position="83"/>
    </location>
</feature>
<feature type="glycosylation site" description="N-linked (GlcNAc...) asparagine" evidence="2">
    <location>
        <position position="132"/>
    </location>
</feature>
<feature type="glycosylation site" description="N-linked (GlcNAc...) asparagine" evidence="2">
    <location>
        <position position="159"/>
    </location>
</feature>
<feature type="glycosylation site" description="N-linked (GlcNAc...) asparagine" evidence="2">
    <location>
        <position position="288"/>
    </location>
</feature>
<accession>Q8IJS6</accession>
<comment type="function">
    <text evidence="3 4 5">Essential for blood-stage parasite viability (PubMed:39660822). Required for apicoplast biogenesis (PubMed:39660822). Associates with the apicoplast genome and mediates apicoplast gene expression (PubMed:39660822). Can bind heme (PubMed:19073183, PubMed:22992734). Can bind protoporphyrin IX (PubMed:19073183).</text>
</comment>
<comment type="subcellular location">
    <subcellularLocation>
        <location evidence="5">Plastid</location>
        <location evidence="5">Apicoplast</location>
    </subcellularLocation>
</comment>
<comment type="PTM">
    <text evidence="5">Proteolytically cleaved; targeted by its N-terminal leader sequence for import into the apicoplast where it undergoes proteolytic processing, resulting in an N-terminus starting at or near Gly-33 in the mature protein.</text>
</comment>
<comment type="disruption phenotype">
    <text evidence="5">Conditional knockdown results in severe growth defects and widespread parasite death in the third intraerythrocytic growth cycle (PubMed:39660822). Impaired apicoplast development (PubMed:39660822).</text>
</comment>
<comment type="caution">
    <text evidence="3 4">In vitro studies of a recombinant protein suggest that it may enzymatically degrade some heme to biliverdin or bilirubin, using an apicoplast-targeted ferredoxin as a reductant cofactor (PubMed:19073183). Another report, however, does not confirm such activities; this observation is consistent with the absence of the conserved His residue used by known heme-degrading enzymes to coordinate the iron of bound heme (PubMed:22992734).</text>
</comment>
<sequence length="305" mass="37012">MIRKIIILMFTFFSNIHNEKIYHHKQRRKFLKGPLGYLNRNVIQKKHYNLYAKKFINYKEIQIQRINDYRKRSGVDKNNINYNLRDTYNYHETHLFVRNEVLPTLAKIENENLKEKEKNKEIFRNINDYNSNFTRQTFLQFLMDLYNIFLKIDDLFLENKTYFSILIYNGPMQLTNHLYDDIIYVSSVVENSDDVSPSEYCMEYISHLENLCEENKLSFLAHAYVFYKNFHLSKEHLLKSICKYLNIIKKLKSSTYVADVENFEFCLNKMSRKWSRWEKDNFLASLHNATNKMMILTKHFEKVKS</sequence>
<organism evidence="12">
    <name type="scientific">Plasmodium falciparum (isolate 3D7)</name>
    <dbReference type="NCBI Taxonomy" id="36329"/>
    <lineage>
        <taxon>Eukaryota</taxon>
        <taxon>Sar</taxon>
        <taxon>Alveolata</taxon>
        <taxon>Apicomplexa</taxon>
        <taxon>Aconoidasida</taxon>
        <taxon>Haemosporida</taxon>
        <taxon>Plasmodiidae</taxon>
        <taxon>Plasmodium</taxon>
        <taxon>Plasmodium (Laverania)</taxon>
    </lineage>
</organism>
<dbReference type="EMBL" id="LN999944">
    <property type="protein sequence ID" value="CZT98369.1"/>
    <property type="molecule type" value="Genomic_DNA"/>
</dbReference>
<dbReference type="RefSeq" id="XP_001347401.2">
    <property type="nucleotide sequence ID" value="XM_001347365.2"/>
</dbReference>
<dbReference type="PDB" id="8ZLD">
    <property type="method" value="X-ray"/>
    <property type="resolution" value="2.78 A"/>
    <property type="chains" value="A/B=84-305"/>
</dbReference>
<dbReference type="PDBsum" id="8ZLD"/>
<dbReference type="SMR" id="Q8IJS6"/>
<dbReference type="PaxDb" id="5833-PF10_0116"/>
<dbReference type="EnsemblProtists" id="CZT98369">
    <property type="protein sequence ID" value="CZT98369"/>
    <property type="gene ID" value="PF3D7_1011900"/>
</dbReference>
<dbReference type="GeneID" id="810274"/>
<dbReference type="KEGG" id="pfa:PF3D7_1011900"/>
<dbReference type="VEuPathDB" id="PlasmoDB:PF3D7_1011900"/>
<dbReference type="HOGENOM" id="CLU_913587_0_0_1"/>
<dbReference type="InParanoid" id="Q8IJS6"/>
<dbReference type="OMA" id="VSNFEFC"/>
<dbReference type="OrthoDB" id="365431at2759"/>
<dbReference type="PhylomeDB" id="Q8IJS6"/>
<dbReference type="Proteomes" id="UP000001450">
    <property type="component" value="Chromosome 10"/>
</dbReference>
<dbReference type="GO" id="GO:0004392">
    <property type="term" value="F:heme oxygenase (decyclizing) activity"/>
    <property type="evidence" value="ECO:0000314"/>
    <property type="project" value="GeneDB"/>
</dbReference>
<dbReference type="FunFam" id="1.20.910.10:FF:000013">
    <property type="entry name" value="Heme oxygenase"/>
    <property type="match status" value="1"/>
</dbReference>
<dbReference type="Gene3D" id="1.20.910.10">
    <property type="entry name" value="Heme oxygenase-like"/>
    <property type="match status" value="1"/>
</dbReference>
<dbReference type="InterPro" id="IPR016084">
    <property type="entry name" value="Haem_Oase-like_multi-hlx"/>
</dbReference>
<dbReference type="SUPFAM" id="SSF48613">
    <property type="entry name" value="Heme oxygenase-like"/>
    <property type="match status" value="1"/>
</dbReference>
<protein>
    <recommendedName>
        <fullName evidence="9">Divergent heme oxygenase-like protein</fullName>
        <shortName evidence="6 7 8 9">PfHO</shortName>
    </recommendedName>
</protein>
<gene>
    <name evidence="10" type="primary">HO</name>
    <name evidence="11" type="ORF">PF3D7_1011900</name>
</gene>
<name>DHMOX_PLAF7</name>
<evidence type="ECO:0000255" key="1"/>
<evidence type="ECO:0000255" key="2">
    <source>
        <dbReference type="PROSITE-ProRule" id="PRU00498"/>
    </source>
</evidence>
<evidence type="ECO:0000269" key="3">
    <source>
    </source>
</evidence>
<evidence type="ECO:0000269" key="4">
    <source>
    </source>
</evidence>
<evidence type="ECO:0000269" key="5">
    <source>
    </source>
</evidence>
<evidence type="ECO:0000303" key="6">
    <source>
    </source>
</evidence>
<evidence type="ECO:0000303" key="7">
    <source>
    </source>
</evidence>
<evidence type="ECO:0000303" key="8">
    <source>
    </source>
</evidence>
<evidence type="ECO:0000303" key="9">
    <source>
    </source>
</evidence>
<evidence type="ECO:0000305" key="10"/>
<evidence type="ECO:0000312" key="11">
    <source>
        <dbReference type="EMBL" id="CZT98369.1"/>
    </source>
</evidence>
<evidence type="ECO:0000312" key="12">
    <source>
        <dbReference type="Proteomes" id="UP000001450"/>
    </source>
</evidence>
<evidence type="ECO:0007744" key="13">
    <source>
        <dbReference type="PDB" id="8ZLD"/>
    </source>
</evidence>
<keyword id="KW-0002">3D-structure</keyword>
<keyword id="KW-0933">Apicoplast</keyword>
<keyword id="KW-0903">Direct protein sequencing</keyword>
<keyword id="KW-0325">Glycoprotein</keyword>
<keyword id="KW-0349">Heme</keyword>
<keyword id="KW-0408">Iron</keyword>
<keyword id="KW-0479">Metal-binding</keyword>
<keyword id="KW-0934">Plastid</keyword>
<keyword id="KW-1185">Reference proteome</keyword>
<keyword id="KW-0732">Signal</keyword>